<sequence length="148" mass="16504">MKVIFTQDVKGKGKKGEVKDVPVGYANNFLLKNKYAVEATPGNLKQLEQQNKRAEADRQQEIDDAKALKEQLKDIEVEVSAKTGEGGKLFGSISTKQIAEALKKQHDIKIDKRKMDLPHGIHALGYTNVPVKLDKEVEGTIRVHTVEQ</sequence>
<proteinExistence type="inferred from homology"/>
<accession>Q8CU90</accession>
<protein>
    <recommendedName>
        <fullName evidence="1">Large ribosomal subunit protein bL9</fullName>
    </recommendedName>
    <alternativeName>
        <fullName evidence="2">50S ribosomal protein L9</fullName>
    </alternativeName>
</protein>
<reference key="1">
    <citation type="journal article" date="2003" name="Mol. Microbiol.">
        <title>Genome-based analysis of virulence genes in a non-biofilm-forming Staphylococcus epidermidis strain (ATCC 12228).</title>
        <authorList>
            <person name="Zhang Y.-Q."/>
            <person name="Ren S.-X."/>
            <person name="Li H.-L."/>
            <person name="Wang Y.-X."/>
            <person name="Fu G."/>
            <person name="Yang J."/>
            <person name="Qin Z.-Q."/>
            <person name="Miao Y.-G."/>
            <person name="Wang W.-Y."/>
            <person name="Chen R.-S."/>
            <person name="Shen Y."/>
            <person name="Chen Z."/>
            <person name="Yuan Z.-H."/>
            <person name="Zhao G.-P."/>
            <person name="Qu D."/>
            <person name="Danchin A."/>
            <person name="Wen Y.-M."/>
        </authorList>
    </citation>
    <scope>NUCLEOTIDE SEQUENCE [LARGE SCALE GENOMIC DNA]</scope>
    <source>
        <strain>ATCC 12228 / FDA PCI 1200</strain>
    </source>
</reference>
<dbReference type="EMBL" id="AE015929">
    <property type="protein sequence ID" value="AAO03611.1"/>
    <property type="molecule type" value="Genomic_DNA"/>
</dbReference>
<dbReference type="RefSeq" id="NP_763569.1">
    <property type="nucleotide sequence ID" value="NC_004461.1"/>
</dbReference>
<dbReference type="RefSeq" id="WP_001831811.1">
    <property type="nucleotide sequence ID" value="NZ_WBME01000012.1"/>
</dbReference>
<dbReference type="SMR" id="Q8CU90"/>
<dbReference type="GeneID" id="50017429"/>
<dbReference type="KEGG" id="sep:SE_0014"/>
<dbReference type="PATRIC" id="fig|176280.10.peg.15"/>
<dbReference type="eggNOG" id="COG0359">
    <property type="taxonomic scope" value="Bacteria"/>
</dbReference>
<dbReference type="HOGENOM" id="CLU_078938_3_2_9"/>
<dbReference type="OrthoDB" id="9788336at2"/>
<dbReference type="Proteomes" id="UP000001411">
    <property type="component" value="Chromosome"/>
</dbReference>
<dbReference type="GO" id="GO:1990904">
    <property type="term" value="C:ribonucleoprotein complex"/>
    <property type="evidence" value="ECO:0007669"/>
    <property type="project" value="UniProtKB-KW"/>
</dbReference>
<dbReference type="GO" id="GO:0005840">
    <property type="term" value="C:ribosome"/>
    <property type="evidence" value="ECO:0007669"/>
    <property type="project" value="UniProtKB-KW"/>
</dbReference>
<dbReference type="GO" id="GO:0019843">
    <property type="term" value="F:rRNA binding"/>
    <property type="evidence" value="ECO:0007669"/>
    <property type="project" value="UniProtKB-UniRule"/>
</dbReference>
<dbReference type="GO" id="GO:0003735">
    <property type="term" value="F:structural constituent of ribosome"/>
    <property type="evidence" value="ECO:0007669"/>
    <property type="project" value="InterPro"/>
</dbReference>
<dbReference type="GO" id="GO:0006412">
    <property type="term" value="P:translation"/>
    <property type="evidence" value="ECO:0007669"/>
    <property type="project" value="UniProtKB-UniRule"/>
</dbReference>
<dbReference type="FunFam" id="3.10.430.100:FF:000002">
    <property type="entry name" value="50S ribosomal protein L9"/>
    <property type="match status" value="1"/>
</dbReference>
<dbReference type="FunFam" id="3.40.5.10:FF:000002">
    <property type="entry name" value="50S ribosomal protein L9"/>
    <property type="match status" value="1"/>
</dbReference>
<dbReference type="Gene3D" id="3.10.430.100">
    <property type="entry name" value="Ribosomal protein L9, C-terminal domain"/>
    <property type="match status" value="1"/>
</dbReference>
<dbReference type="Gene3D" id="3.40.5.10">
    <property type="entry name" value="Ribosomal protein L9, N-terminal domain"/>
    <property type="match status" value="1"/>
</dbReference>
<dbReference type="HAMAP" id="MF_00503">
    <property type="entry name" value="Ribosomal_bL9"/>
    <property type="match status" value="1"/>
</dbReference>
<dbReference type="InterPro" id="IPR000244">
    <property type="entry name" value="Ribosomal_bL9"/>
</dbReference>
<dbReference type="InterPro" id="IPR009027">
    <property type="entry name" value="Ribosomal_bL9/RNase_H1_N"/>
</dbReference>
<dbReference type="InterPro" id="IPR020594">
    <property type="entry name" value="Ribosomal_bL9_bac/chp"/>
</dbReference>
<dbReference type="InterPro" id="IPR020069">
    <property type="entry name" value="Ribosomal_bL9_C"/>
</dbReference>
<dbReference type="InterPro" id="IPR036791">
    <property type="entry name" value="Ribosomal_bL9_C_sf"/>
</dbReference>
<dbReference type="InterPro" id="IPR020070">
    <property type="entry name" value="Ribosomal_bL9_N"/>
</dbReference>
<dbReference type="InterPro" id="IPR036935">
    <property type="entry name" value="Ribosomal_bL9_N_sf"/>
</dbReference>
<dbReference type="NCBIfam" id="TIGR00158">
    <property type="entry name" value="L9"/>
    <property type="match status" value="1"/>
</dbReference>
<dbReference type="PANTHER" id="PTHR21368">
    <property type="entry name" value="50S RIBOSOMAL PROTEIN L9"/>
    <property type="match status" value="1"/>
</dbReference>
<dbReference type="Pfam" id="PF03948">
    <property type="entry name" value="Ribosomal_L9_C"/>
    <property type="match status" value="1"/>
</dbReference>
<dbReference type="Pfam" id="PF01281">
    <property type="entry name" value="Ribosomal_L9_N"/>
    <property type="match status" value="1"/>
</dbReference>
<dbReference type="SUPFAM" id="SSF55658">
    <property type="entry name" value="L9 N-domain-like"/>
    <property type="match status" value="1"/>
</dbReference>
<dbReference type="SUPFAM" id="SSF55653">
    <property type="entry name" value="Ribosomal protein L9 C-domain"/>
    <property type="match status" value="1"/>
</dbReference>
<dbReference type="PROSITE" id="PS00651">
    <property type="entry name" value="RIBOSOMAL_L9"/>
    <property type="match status" value="1"/>
</dbReference>
<comment type="function">
    <text evidence="1">Binds to the 23S rRNA.</text>
</comment>
<comment type="similarity">
    <text evidence="1">Belongs to the bacterial ribosomal protein bL9 family.</text>
</comment>
<feature type="chain" id="PRO_0000176681" description="Large ribosomal subunit protein bL9">
    <location>
        <begin position="1"/>
        <end position="148"/>
    </location>
</feature>
<organism>
    <name type="scientific">Staphylococcus epidermidis (strain ATCC 12228 / FDA PCI 1200)</name>
    <dbReference type="NCBI Taxonomy" id="176280"/>
    <lineage>
        <taxon>Bacteria</taxon>
        <taxon>Bacillati</taxon>
        <taxon>Bacillota</taxon>
        <taxon>Bacilli</taxon>
        <taxon>Bacillales</taxon>
        <taxon>Staphylococcaceae</taxon>
        <taxon>Staphylococcus</taxon>
    </lineage>
</organism>
<evidence type="ECO:0000255" key="1">
    <source>
        <dbReference type="HAMAP-Rule" id="MF_00503"/>
    </source>
</evidence>
<evidence type="ECO:0000305" key="2"/>
<keyword id="KW-0687">Ribonucleoprotein</keyword>
<keyword id="KW-0689">Ribosomal protein</keyword>
<keyword id="KW-0694">RNA-binding</keyword>
<keyword id="KW-0699">rRNA-binding</keyword>
<gene>
    <name evidence="1" type="primary">rplI</name>
    <name type="ordered locus">SE_0014</name>
</gene>
<name>RL9_STAES</name>